<organism>
    <name type="scientific">Janthinobacterium sp. (strain Marseille)</name>
    <name type="common">Minibacterium massiliensis</name>
    <dbReference type="NCBI Taxonomy" id="375286"/>
    <lineage>
        <taxon>Bacteria</taxon>
        <taxon>Pseudomonadati</taxon>
        <taxon>Pseudomonadota</taxon>
        <taxon>Betaproteobacteria</taxon>
        <taxon>Burkholderiales</taxon>
        <taxon>Oxalobacteraceae</taxon>
        <taxon>Janthinobacterium</taxon>
    </lineage>
</organism>
<sequence length="548" mass="57662">MAAKEVIFGDAARAKMVEGVNVLANAVKVTLGPKGRNVVLERSFGAPTVTKDGVSVAKEIELKDKLQNMGAQLVKEVASRTSDNAGDGTTTATVLAQAIVREGMKYVAAGMNPMDLKRGIDKAVAATVEQLAAIAKPCTTTKEIAQVGSISANSDASIGERIAEAMEKVGKEGVITVEDGKSLNDELDIVEGMQFDRGYLSPYFINNPEKQTAILENPFILLCDKKISNIRDLLPVLEQVAKAGRPLLIIAEDIEGEALATLVVNNIRGILKTCAVKAPGFGDRRKAMLEDIAILSGGQVVAEEVGLTLEKITLEELGQAKRIEIGKENTTLIDGNGQAVTIEARVKQIRAQIEEATSDYDREKLQERVAKLAGGVAVIKVGAATEVEMKEKKARVEDALHATRAAVEEGIVPGGGVALLRARAAIKIKGDNPDQEAGIRIVLRAMEEPLRMIVQNAGEEASVVVAKVLEGKGNFGYNAANGTYGDMVEMGVLDPAKVTRSALQNAASIAALLLTTDCMVAEVAEDKAAGGMGDMGGMGGMGGMGGMM</sequence>
<dbReference type="EC" id="5.6.1.7" evidence="1"/>
<dbReference type="EMBL" id="CP000269">
    <property type="protein sequence ID" value="ABR89130.1"/>
    <property type="molecule type" value="Genomic_DNA"/>
</dbReference>
<dbReference type="RefSeq" id="WP_012080504.1">
    <property type="nucleotide sequence ID" value="NC_009659.1"/>
</dbReference>
<dbReference type="SMR" id="A6T1E5"/>
<dbReference type="STRING" id="375286.mma_2652"/>
<dbReference type="KEGG" id="mms:mma_2652"/>
<dbReference type="eggNOG" id="COG0459">
    <property type="taxonomic scope" value="Bacteria"/>
</dbReference>
<dbReference type="HOGENOM" id="CLU_016503_3_0_4"/>
<dbReference type="OrthoDB" id="9766614at2"/>
<dbReference type="Proteomes" id="UP000006388">
    <property type="component" value="Chromosome"/>
</dbReference>
<dbReference type="GO" id="GO:0005737">
    <property type="term" value="C:cytoplasm"/>
    <property type="evidence" value="ECO:0007669"/>
    <property type="project" value="UniProtKB-SubCell"/>
</dbReference>
<dbReference type="GO" id="GO:0005524">
    <property type="term" value="F:ATP binding"/>
    <property type="evidence" value="ECO:0007669"/>
    <property type="project" value="UniProtKB-UniRule"/>
</dbReference>
<dbReference type="GO" id="GO:0140662">
    <property type="term" value="F:ATP-dependent protein folding chaperone"/>
    <property type="evidence" value="ECO:0007669"/>
    <property type="project" value="InterPro"/>
</dbReference>
<dbReference type="GO" id="GO:0016853">
    <property type="term" value="F:isomerase activity"/>
    <property type="evidence" value="ECO:0007669"/>
    <property type="project" value="UniProtKB-KW"/>
</dbReference>
<dbReference type="GO" id="GO:0051082">
    <property type="term" value="F:unfolded protein binding"/>
    <property type="evidence" value="ECO:0007669"/>
    <property type="project" value="UniProtKB-UniRule"/>
</dbReference>
<dbReference type="GO" id="GO:0042026">
    <property type="term" value="P:protein refolding"/>
    <property type="evidence" value="ECO:0007669"/>
    <property type="project" value="UniProtKB-UniRule"/>
</dbReference>
<dbReference type="CDD" id="cd03344">
    <property type="entry name" value="GroEL"/>
    <property type="match status" value="1"/>
</dbReference>
<dbReference type="FunFam" id="1.10.560.10:FF:000001">
    <property type="entry name" value="60 kDa chaperonin"/>
    <property type="match status" value="1"/>
</dbReference>
<dbReference type="FunFam" id="3.50.7.10:FF:000001">
    <property type="entry name" value="60 kDa chaperonin"/>
    <property type="match status" value="1"/>
</dbReference>
<dbReference type="Gene3D" id="3.50.7.10">
    <property type="entry name" value="GroEL"/>
    <property type="match status" value="1"/>
</dbReference>
<dbReference type="Gene3D" id="1.10.560.10">
    <property type="entry name" value="GroEL-like equatorial domain"/>
    <property type="match status" value="1"/>
</dbReference>
<dbReference type="Gene3D" id="3.30.260.10">
    <property type="entry name" value="TCP-1-like chaperonin intermediate domain"/>
    <property type="match status" value="1"/>
</dbReference>
<dbReference type="HAMAP" id="MF_00600">
    <property type="entry name" value="CH60"/>
    <property type="match status" value="1"/>
</dbReference>
<dbReference type="InterPro" id="IPR018370">
    <property type="entry name" value="Chaperonin_Cpn60_CS"/>
</dbReference>
<dbReference type="InterPro" id="IPR001844">
    <property type="entry name" value="Cpn60/GroEL"/>
</dbReference>
<dbReference type="InterPro" id="IPR002423">
    <property type="entry name" value="Cpn60/GroEL/TCP-1"/>
</dbReference>
<dbReference type="InterPro" id="IPR027409">
    <property type="entry name" value="GroEL-like_apical_dom_sf"/>
</dbReference>
<dbReference type="InterPro" id="IPR027413">
    <property type="entry name" value="GROEL-like_equatorial_sf"/>
</dbReference>
<dbReference type="InterPro" id="IPR027410">
    <property type="entry name" value="TCP-1-like_intermed_sf"/>
</dbReference>
<dbReference type="NCBIfam" id="TIGR02348">
    <property type="entry name" value="GroEL"/>
    <property type="match status" value="1"/>
</dbReference>
<dbReference type="NCBIfam" id="NF000592">
    <property type="entry name" value="PRK00013.1"/>
    <property type="match status" value="1"/>
</dbReference>
<dbReference type="NCBIfam" id="NF009487">
    <property type="entry name" value="PRK12849.1"/>
    <property type="match status" value="1"/>
</dbReference>
<dbReference type="NCBIfam" id="NF009488">
    <property type="entry name" value="PRK12850.1"/>
    <property type="match status" value="1"/>
</dbReference>
<dbReference type="NCBIfam" id="NF009489">
    <property type="entry name" value="PRK12851.1"/>
    <property type="match status" value="1"/>
</dbReference>
<dbReference type="PANTHER" id="PTHR45633">
    <property type="entry name" value="60 KDA HEAT SHOCK PROTEIN, MITOCHONDRIAL"/>
    <property type="match status" value="1"/>
</dbReference>
<dbReference type="Pfam" id="PF00118">
    <property type="entry name" value="Cpn60_TCP1"/>
    <property type="match status" value="1"/>
</dbReference>
<dbReference type="PRINTS" id="PR00298">
    <property type="entry name" value="CHAPERONIN60"/>
</dbReference>
<dbReference type="SUPFAM" id="SSF52029">
    <property type="entry name" value="GroEL apical domain-like"/>
    <property type="match status" value="1"/>
</dbReference>
<dbReference type="SUPFAM" id="SSF48592">
    <property type="entry name" value="GroEL equatorial domain-like"/>
    <property type="match status" value="1"/>
</dbReference>
<dbReference type="SUPFAM" id="SSF54849">
    <property type="entry name" value="GroEL-intermediate domain like"/>
    <property type="match status" value="1"/>
</dbReference>
<dbReference type="PROSITE" id="PS00296">
    <property type="entry name" value="CHAPERONINS_CPN60"/>
    <property type="match status" value="1"/>
</dbReference>
<evidence type="ECO:0000255" key="1">
    <source>
        <dbReference type="HAMAP-Rule" id="MF_00600"/>
    </source>
</evidence>
<protein>
    <recommendedName>
        <fullName evidence="1">Chaperonin GroEL</fullName>
        <ecNumber evidence="1">5.6.1.7</ecNumber>
    </recommendedName>
    <alternativeName>
        <fullName evidence="1">60 kDa chaperonin</fullName>
    </alternativeName>
    <alternativeName>
        <fullName evidence="1">Chaperonin-60</fullName>
        <shortName evidence="1">Cpn60</shortName>
    </alternativeName>
</protein>
<gene>
    <name evidence="1" type="primary">groEL</name>
    <name evidence="1" type="synonym">groL</name>
    <name type="ordered locus">mma_2652</name>
</gene>
<reference key="1">
    <citation type="journal article" date="2007" name="PLoS Genet.">
        <title>Genome analysis of Minibacterium massiliensis highlights the convergent evolution of water-living bacteria.</title>
        <authorList>
            <person name="Audic S."/>
            <person name="Robert C."/>
            <person name="Campagna B."/>
            <person name="Parinello H."/>
            <person name="Claverie J.-M."/>
            <person name="Raoult D."/>
            <person name="Drancourt M."/>
        </authorList>
    </citation>
    <scope>NUCLEOTIDE SEQUENCE [LARGE SCALE GENOMIC DNA]</scope>
    <source>
        <strain>Marseille</strain>
    </source>
</reference>
<feature type="chain" id="PRO_1000025795" description="Chaperonin GroEL">
    <location>
        <begin position="1"/>
        <end position="548"/>
    </location>
</feature>
<feature type="binding site" evidence="1">
    <location>
        <begin position="30"/>
        <end position="33"/>
    </location>
    <ligand>
        <name>ATP</name>
        <dbReference type="ChEBI" id="CHEBI:30616"/>
    </ligand>
</feature>
<feature type="binding site" evidence="1">
    <location>
        <position position="51"/>
    </location>
    <ligand>
        <name>ATP</name>
        <dbReference type="ChEBI" id="CHEBI:30616"/>
    </ligand>
</feature>
<feature type="binding site" evidence="1">
    <location>
        <begin position="87"/>
        <end position="91"/>
    </location>
    <ligand>
        <name>ATP</name>
        <dbReference type="ChEBI" id="CHEBI:30616"/>
    </ligand>
</feature>
<feature type="binding site" evidence="1">
    <location>
        <position position="415"/>
    </location>
    <ligand>
        <name>ATP</name>
        <dbReference type="ChEBI" id="CHEBI:30616"/>
    </ligand>
</feature>
<feature type="binding site" evidence="1">
    <location>
        <begin position="478"/>
        <end position="480"/>
    </location>
    <ligand>
        <name>ATP</name>
        <dbReference type="ChEBI" id="CHEBI:30616"/>
    </ligand>
</feature>
<feature type="binding site" evidence="1">
    <location>
        <position position="494"/>
    </location>
    <ligand>
        <name>ATP</name>
        <dbReference type="ChEBI" id="CHEBI:30616"/>
    </ligand>
</feature>
<comment type="function">
    <text evidence="1">Together with its co-chaperonin GroES, plays an essential role in assisting protein folding. The GroEL-GroES system forms a nano-cage that allows encapsulation of the non-native substrate proteins and provides a physical environment optimized to promote and accelerate protein folding.</text>
</comment>
<comment type="catalytic activity">
    <reaction evidence="1">
        <text>ATP + H2O + a folded polypeptide = ADP + phosphate + an unfolded polypeptide.</text>
        <dbReference type="EC" id="5.6.1.7"/>
    </reaction>
</comment>
<comment type="subunit">
    <text evidence="1">Forms a cylinder of 14 subunits composed of two heptameric rings stacked back-to-back. Interacts with the co-chaperonin GroES.</text>
</comment>
<comment type="subcellular location">
    <subcellularLocation>
        <location evidence="1">Cytoplasm</location>
    </subcellularLocation>
</comment>
<comment type="similarity">
    <text evidence="1">Belongs to the chaperonin (HSP60) family.</text>
</comment>
<proteinExistence type="inferred from homology"/>
<keyword id="KW-0067">ATP-binding</keyword>
<keyword id="KW-0143">Chaperone</keyword>
<keyword id="KW-0963">Cytoplasm</keyword>
<keyword id="KW-0413">Isomerase</keyword>
<keyword id="KW-0547">Nucleotide-binding</keyword>
<name>CH60_JANMA</name>
<accession>A6T1E5</accession>